<accession>Q9J4A3</accession>
<name>NCAP_IBVD1</name>
<protein>
    <recommendedName>
        <fullName evidence="1">Nucleoprotein</fullName>
    </recommendedName>
    <alternativeName>
        <fullName evidence="1">Nucleocapsid protein</fullName>
        <shortName evidence="1">NC</shortName>
        <shortName evidence="1">Protein N</shortName>
    </alternativeName>
</protein>
<organism>
    <name type="scientific">Avian infectious bronchitis virus (strain D1466)</name>
    <name type="common">IBV</name>
    <dbReference type="NCBI Taxonomy" id="231472"/>
    <lineage>
        <taxon>Viruses</taxon>
        <taxon>Riboviria</taxon>
        <taxon>Orthornavirae</taxon>
        <taxon>Pisuviricota</taxon>
        <taxon>Pisoniviricetes</taxon>
        <taxon>Nidovirales</taxon>
        <taxon>Cornidovirineae</taxon>
        <taxon>Coronaviridae</taxon>
        <taxon>Orthocoronavirinae</taxon>
        <taxon>Gammacoronavirus</taxon>
        <taxon>Igacovirus</taxon>
        <taxon>Avian coronavirus</taxon>
    </lineage>
</organism>
<gene>
    <name evidence="1" type="primary">N</name>
    <name type="ORF">6</name>
</gene>
<comment type="function">
    <text evidence="1">Packages the positive strand viral genome RNA into a helical ribonucleocapsid (RNP) and plays a fundamental role during virion assembly through its interactions with the viral genome and membrane protein M. Plays an important role in enhancing the efficiency of subgenomic viral RNA transcription as well as viral replication.</text>
</comment>
<comment type="subunit">
    <text evidence="1">Homooligomer. Both monomeric and oligomeric forms interact with RNA. Interacts with protein M. Interacts with NSP3; this interaction serves to tether the genome to the newly translated replicase-transcriptase complex at a very early stage of infection.</text>
</comment>
<comment type="subcellular location">
    <subcellularLocation>
        <location evidence="1">Virion</location>
    </subcellularLocation>
    <subcellularLocation>
        <location evidence="1">Host endoplasmic reticulum-Golgi intermediate compartment</location>
    </subcellularLocation>
    <subcellularLocation>
        <location evidence="1">Host Golgi apparatus</location>
    </subcellularLocation>
    <text evidence="1">Located inside the virion, complexed with the viral RNA. Probably associates with ER-derived membranes where it participates in viral RNA synthesis and virus budding.</text>
</comment>
<comment type="PTM">
    <text evidence="1">ADP-ribosylated. The ADP-ribosylation is retained in the virion during infection.</text>
</comment>
<comment type="PTM">
    <text evidence="1">Phosphorylated on serine and threonine residues.</text>
</comment>
<comment type="similarity">
    <text evidence="1">Belongs to the gammacoronavirus nucleocapsid protein family.</text>
</comment>
<reference key="1">
    <citation type="journal article" date="2000" name="Arch. Virol.">
        <title>Evidence of genetic diversity generated by recombination among avian coronavirus IBV.</title>
        <authorList>
            <person name="Lee C.-W."/>
            <person name="Jackwood M.W."/>
        </authorList>
    </citation>
    <scope>NUCLEOTIDE SEQUENCE [GENOMIC RNA]</scope>
</reference>
<evidence type="ECO:0000255" key="1">
    <source>
        <dbReference type="HAMAP-Rule" id="MF_04097"/>
    </source>
</evidence>
<evidence type="ECO:0000255" key="2">
    <source>
        <dbReference type="PROSITE-ProRule" id="PRU01276"/>
    </source>
</evidence>
<evidence type="ECO:0000255" key="3">
    <source>
        <dbReference type="PROSITE-ProRule" id="PRU01277"/>
    </source>
</evidence>
<evidence type="ECO:0000256" key="4">
    <source>
        <dbReference type="SAM" id="MobiDB-lite"/>
    </source>
</evidence>
<keyword id="KW-0013">ADP-ribosylation</keyword>
<keyword id="KW-1015">Disulfide bond</keyword>
<keyword id="KW-1040">Host Golgi apparatus</keyword>
<keyword id="KW-0597">Phosphoprotein</keyword>
<keyword id="KW-0687">Ribonucleoprotein</keyword>
<keyword id="KW-0694">RNA-binding</keyword>
<keyword id="KW-0804">Transcription</keyword>
<keyword id="KW-0805">Transcription regulation</keyword>
<keyword id="KW-0543">Viral nucleoprotein</keyword>
<keyword id="KW-0946">Virion</keyword>
<proteinExistence type="inferred from homology"/>
<feature type="chain" id="PRO_0000105979" description="Nucleoprotein">
    <location>
        <begin position="1"/>
        <end position="409"/>
    </location>
</feature>
<feature type="domain" description="CoV N NTD" evidence="2">
    <location>
        <begin position="31"/>
        <end position="156"/>
    </location>
</feature>
<feature type="domain" description="CoV N CTD" evidence="3">
    <location>
        <begin position="215"/>
        <end position="331"/>
    </location>
</feature>
<feature type="region of interest" description="Disordered" evidence="4">
    <location>
        <begin position="1"/>
        <end position="32"/>
    </location>
</feature>
<feature type="region of interest" description="RNA-binding" evidence="1">
    <location>
        <begin position="29"/>
        <end position="160"/>
    </location>
</feature>
<feature type="region of interest" description="Disordered" evidence="4">
    <location>
        <begin position="44"/>
        <end position="63"/>
    </location>
</feature>
<feature type="region of interest" description="Disordered" evidence="4">
    <location>
        <begin position="120"/>
        <end position="145"/>
    </location>
</feature>
<feature type="region of interest" description="Disordered" evidence="4">
    <location>
        <begin position="164"/>
        <end position="193"/>
    </location>
</feature>
<feature type="region of interest" description="Dimerization" evidence="1">
    <location>
        <begin position="226"/>
        <end position="333"/>
    </location>
</feature>
<feature type="region of interest" description="Disordered" evidence="4">
    <location>
        <begin position="327"/>
        <end position="409"/>
    </location>
</feature>
<feature type="compositionally biased region" description="Low complexity" evidence="4">
    <location>
        <begin position="15"/>
        <end position="31"/>
    </location>
</feature>
<feature type="compositionally biased region" description="Low complexity" evidence="4">
    <location>
        <begin position="164"/>
        <end position="179"/>
    </location>
</feature>
<feature type="compositionally biased region" description="Basic and acidic residues" evidence="4">
    <location>
        <begin position="180"/>
        <end position="192"/>
    </location>
</feature>
<feature type="compositionally biased region" description="Polar residues" evidence="4">
    <location>
        <begin position="341"/>
        <end position="355"/>
    </location>
</feature>
<feature type="compositionally biased region" description="Basic and acidic residues" evidence="4">
    <location>
        <begin position="368"/>
        <end position="384"/>
    </location>
</feature>
<feature type="modified residue" description="Phosphoserine; by host" evidence="1">
    <location>
        <position position="190"/>
    </location>
</feature>
<feature type="modified residue" description="Phosphothreonine; by host" evidence="1">
    <location>
        <position position="378"/>
    </location>
</feature>
<feature type="modified residue" description="Phosphoserine; by host" evidence="1">
    <location>
        <position position="379"/>
    </location>
</feature>
<feature type="disulfide bond" evidence="1">
    <location>
        <begin position="320"/>
        <end position="323"/>
    </location>
</feature>
<organismHost>
    <name type="scientific">Gallus gallus</name>
    <name type="common">Chicken</name>
    <dbReference type="NCBI Taxonomy" id="9031"/>
</organismHost>
<sequence length="409" mass="45176">MASGKTTGKTDAPAPVIKLGGPKPPKVGSSGNASWFQALKAKKLNSPPPKFEGSGVPDNENLKLSQQHGYWRRQARYKPGKGGRKSVPDAWYFYYTGTGPAADLNWGYSQDGIVWVSAKGADTKSRSNQGTRDPDKFDQYPLRFSDGGPDGNFRWDFIPINRGRSGRSTAASSAASSRAPSRDGSRGRRSGAEDDLIARAAKIIQDQQKKGSRITKAKADEMAHRRYCKRTIPPGYKVDQVFGPRTKCKEGNFGDDKMNEEGIKDGRVTAMLNLVPSSHACLFGSRVTPKLQPDGLHLRFEFTTVVSRDDPQFDNYVKICDQCVDGVGTRPKDDEPRPKSRPNSRPATRTSSPAPRQQPQKKEKKSKKQDDEVDKALTSDEERNNAQLEFDDEPKVINWGESALGENEL</sequence>
<dbReference type="EMBL" id="AF203006">
    <property type="protein sequence ID" value="AAF69123.1"/>
    <property type="molecule type" value="Genomic_RNA"/>
</dbReference>
<dbReference type="SMR" id="Q9J4A3"/>
<dbReference type="GO" id="GO:0044172">
    <property type="term" value="C:host cell endoplasmic reticulum-Golgi intermediate compartment"/>
    <property type="evidence" value="ECO:0007669"/>
    <property type="project" value="UniProtKB-SubCell"/>
</dbReference>
<dbReference type="GO" id="GO:0044177">
    <property type="term" value="C:host cell Golgi apparatus"/>
    <property type="evidence" value="ECO:0007669"/>
    <property type="project" value="UniProtKB-SubCell"/>
</dbReference>
<dbReference type="GO" id="GO:1990904">
    <property type="term" value="C:ribonucleoprotein complex"/>
    <property type="evidence" value="ECO:0007669"/>
    <property type="project" value="UniProtKB-KW"/>
</dbReference>
<dbReference type="GO" id="GO:0019013">
    <property type="term" value="C:viral nucleocapsid"/>
    <property type="evidence" value="ECO:0007669"/>
    <property type="project" value="UniProtKB-UniRule"/>
</dbReference>
<dbReference type="GO" id="GO:0003723">
    <property type="term" value="F:RNA binding"/>
    <property type="evidence" value="ECO:0007669"/>
    <property type="project" value="UniProtKB-UniRule"/>
</dbReference>
<dbReference type="CDD" id="cd21595">
    <property type="entry name" value="CoV_N-CTD"/>
    <property type="match status" value="1"/>
</dbReference>
<dbReference type="CDD" id="cd21554">
    <property type="entry name" value="CoV_N-NTD"/>
    <property type="match status" value="1"/>
</dbReference>
<dbReference type="HAMAP" id="MF_04097">
    <property type="entry name" value="GAMMA_CORONA_NCAP"/>
    <property type="match status" value="1"/>
</dbReference>
<dbReference type="InterPro" id="IPR044344">
    <property type="entry name" value="N_prot_C_CoV"/>
</dbReference>
<dbReference type="InterPro" id="IPR044345">
    <property type="entry name" value="N_prot_N_CoV"/>
</dbReference>
<dbReference type="InterPro" id="IPR042547">
    <property type="entry name" value="NCAP_gCoV"/>
</dbReference>
<dbReference type="InterPro" id="IPR001218">
    <property type="entry name" value="Nucleocap_CoV"/>
</dbReference>
<dbReference type="InterPro" id="IPR037179">
    <property type="entry name" value="Nucleocapsid_C"/>
</dbReference>
<dbReference type="InterPro" id="IPR037195">
    <property type="entry name" value="Nucleocapsid_N"/>
</dbReference>
<dbReference type="Pfam" id="PF00937">
    <property type="entry name" value="CoV_nucleocap"/>
    <property type="match status" value="1"/>
</dbReference>
<dbReference type="PIRSF" id="PIRSF003888">
    <property type="entry name" value="Corona_nucleocap"/>
    <property type="match status" value="1"/>
</dbReference>
<dbReference type="SUPFAM" id="SSF110304">
    <property type="entry name" value="Coronavirus RNA-binding domain"/>
    <property type="match status" value="1"/>
</dbReference>
<dbReference type="SUPFAM" id="SSF103068">
    <property type="entry name" value="Nucleocapsid protein dimerization domain"/>
    <property type="match status" value="1"/>
</dbReference>
<dbReference type="PROSITE" id="PS51929">
    <property type="entry name" value="COV_N_CTD"/>
    <property type="match status" value="1"/>
</dbReference>
<dbReference type="PROSITE" id="PS51928">
    <property type="entry name" value="COV_N_NTD"/>
    <property type="match status" value="1"/>
</dbReference>